<dbReference type="EC" id="3.5.4.16" evidence="2"/>
<dbReference type="EMBL" id="CP000468">
    <property type="protein sequence ID" value="ABJ01553.1"/>
    <property type="molecule type" value="Genomic_DNA"/>
</dbReference>
<dbReference type="RefSeq" id="WP_001139613.1">
    <property type="nucleotide sequence ID" value="NZ_CADILS010000004.1"/>
</dbReference>
<dbReference type="SMR" id="A1AD13"/>
<dbReference type="GeneID" id="93775029"/>
<dbReference type="KEGG" id="ecv:APECO1_4398"/>
<dbReference type="HOGENOM" id="CLU_049768_3_2_6"/>
<dbReference type="UniPathway" id="UPA00848">
    <property type="reaction ID" value="UER00151"/>
</dbReference>
<dbReference type="Proteomes" id="UP000008216">
    <property type="component" value="Chromosome"/>
</dbReference>
<dbReference type="GO" id="GO:0005737">
    <property type="term" value="C:cytoplasm"/>
    <property type="evidence" value="ECO:0007669"/>
    <property type="project" value="TreeGrafter"/>
</dbReference>
<dbReference type="GO" id="GO:0005525">
    <property type="term" value="F:GTP binding"/>
    <property type="evidence" value="ECO:0007669"/>
    <property type="project" value="UniProtKB-KW"/>
</dbReference>
<dbReference type="GO" id="GO:0003934">
    <property type="term" value="F:GTP cyclohydrolase I activity"/>
    <property type="evidence" value="ECO:0007669"/>
    <property type="project" value="UniProtKB-UniRule"/>
</dbReference>
<dbReference type="GO" id="GO:0008270">
    <property type="term" value="F:zinc ion binding"/>
    <property type="evidence" value="ECO:0007669"/>
    <property type="project" value="UniProtKB-UniRule"/>
</dbReference>
<dbReference type="GO" id="GO:0006730">
    <property type="term" value="P:one-carbon metabolic process"/>
    <property type="evidence" value="ECO:0007669"/>
    <property type="project" value="UniProtKB-UniRule"/>
</dbReference>
<dbReference type="GO" id="GO:0006729">
    <property type="term" value="P:tetrahydrobiopterin biosynthetic process"/>
    <property type="evidence" value="ECO:0007669"/>
    <property type="project" value="TreeGrafter"/>
</dbReference>
<dbReference type="GO" id="GO:0046654">
    <property type="term" value="P:tetrahydrofolate biosynthetic process"/>
    <property type="evidence" value="ECO:0007669"/>
    <property type="project" value="UniProtKB-UniRule"/>
</dbReference>
<dbReference type="CDD" id="cd00642">
    <property type="entry name" value="GTP_cyclohydro1"/>
    <property type="match status" value="1"/>
</dbReference>
<dbReference type="FunFam" id="1.10.286.10:FF:000002">
    <property type="entry name" value="GTP cyclohydrolase 1"/>
    <property type="match status" value="1"/>
</dbReference>
<dbReference type="FunFam" id="3.30.1130.10:FF:000001">
    <property type="entry name" value="GTP cyclohydrolase 1"/>
    <property type="match status" value="1"/>
</dbReference>
<dbReference type="Gene3D" id="1.10.286.10">
    <property type="match status" value="1"/>
</dbReference>
<dbReference type="Gene3D" id="3.30.1130.10">
    <property type="match status" value="1"/>
</dbReference>
<dbReference type="HAMAP" id="MF_00223">
    <property type="entry name" value="FolE"/>
    <property type="match status" value="1"/>
</dbReference>
<dbReference type="InterPro" id="IPR043133">
    <property type="entry name" value="GTP-CH-I_C/QueF"/>
</dbReference>
<dbReference type="InterPro" id="IPR043134">
    <property type="entry name" value="GTP-CH-I_N"/>
</dbReference>
<dbReference type="InterPro" id="IPR001474">
    <property type="entry name" value="GTP_CycHdrlase_I"/>
</dbReference>
<dbReference type="InterPro" id="IPR018234">
    <property type="entry name" value="GTP_CycHdrlase_I_CS"/>
</dbReference>
<dbReference type="InterPro" id="IPR020602">
    <property type="entry name" value="GTP_CycHdrlase_I_dom"/>
</dbReference>
<dbReference type="NCBIfam" id="TIGR00063">
    <property type="entry name" value="folE"/>
    <property type="match status" value="1"/>
</dbReference>
<dbReference type="NCBIfam" id="NF006824">
    <property type="entry name" value="PRK09347.1-1"/>
    <property type="match status" value="1"/>
</dbReference>
<dbReference type="NCBIfam" id="NF006826">
    <property type="entry name" value="PRK09347.1-3"/>
    <property type="match status" value="1"/>
</dbReference>
<dbReference type="PANTHER" id="PTHR11109:SF7">
    <property type="entry name" value="GTP CYCLOHYDROLASE 1"/>
    <property type="match status" value="1"/>
</dbReference>
<dbReference type="PANTHER" id="PTHR11109">
    <property type="entry name" value="GTP CYCLOHYDROLASE I"/>
    <property type="match status" value="1"/>
</dbReference>
<dbReference type="Pfam" id="PF01227">
    <property type="entry name" value="GTP_cyclohydroI"/>
    <property type="match status" value="1"/>
</dbReference>
<dbReference type="SUPFAM" id="SSF55620">
    <property type="entry name" value="Tetrahydrobiopterin biosynthesis enzymes-like"/>
    <property type="match status" value="1"/>
</dbReference>
<dbReference type="PROSITE" id="PS00859">
    <property type="entry name" value="GTP_CYCLOHYDROL_1_1"/>
    <property type="match status" value="1"/>
</dbReference>
<dbReference type="PROSITE" id="PS00860">
    <property type="entry name" value="GTP_CYCLOHYDROL_1_2"/>
    <property type="match status" value="1"/>
</dbReference>
<evidence type="ECO:0000250" key="1"/>
<evidence type="ECO:0000255" key="2">
    <source>
        <dbReference type="HAMAP-Rule" id="MF_00223"/>
    </source>
</evidence>
<comment type="catalytic activity">
    <reaction evidence="2">
        <text>GTP + H2O = 7,8-dihydroneopterin 3'-triphosphate + formate + H(+)</text>
        <dbReference type="Rhea" id="RHEA:17473"/>
        <dbReference type="ChEBI" id="CHEBI:15377"/>
        <dbReference type="ChEBI" id="CHEBI:15378"/>
        <dbReference type="ChEBI" id="CHEBI:15740"/>
        <dbReference type="ChEBI" id="CHEBI:37565"/>
        <dbReference type="ChEBI" id="CHEBI:58462"/>
        <dbReference type="EC" id="3.5.4.16"/>
    </reaction>
</comment>
<comment type="pathway">
    <text evidence="2">Cofactor biosynthesis; 7,8-dihydroneopterin triphosphate biosynthesis; 7,8-dihydroneopterin triphosphate from GTP: step 1/1.</text>
</comment>
<comment type="subunit">
    <text evidence="1">Toroid-shaped homodecamer, composed of two pentamers of five dimers.</text>
</comment>
<comment type="similarity">
    <text evidence="2">Belongs to the GTP cyclohydrolase I family.</text>
</comment>
<organism>
    <name type="scientific">Escherichia coli O1:K1 / APEC</name>
    <dbReference type="NCBI Taxonomy" id="405955"/>
    <lineage>
        <taxon>Bacteria</taxon>
        <taxon>Pseudomonadati</taxon>
        <taxon>Pseudomonadota</taxon>
        <taxon>Gammaproteobacteria</taxon>
        <taxon>Enterobacterales</taxon>
        <taxon>Enterobacteriaceae</taxon>
        <taxon>Escherichia</taxon>
    </lineage>
</organism>
<proteinExistence type="inferred from homology"/>
<keyword id="KW-0342">GTP-binding</keyword>
<keyword id="KW-0378">Hydrolase</keyword>
<keyword id="KW-0479">Metal-binding</keyword>
<keyword id="KW-0547">Nucleotide-binding</keyword>
<keyword id="KW-0554">One-carbon metabolism</keyword>
<keyword id="KW-1185">Reference proteome</keyword>
<keyword id="KW-0862">Zinc</keyword>
<reference key="1">
    <citation type="journal article" date="2007" name="J. Bacteriol.">
        <title>The genome sequence of avian pathogenic Escherichia coli strain O1:K1:H7 shares strong similarities with human extraintestinal pathogenic E. coli genomes.</title>
        <authorList>
            <person name="Johnson T.J."/>
            <person name="Kariyawasam S."/>
            <person name="Wannemuehler Y."/>
            <person name="Mangiamele P."/>
            <person name="Johnson S.J."/>
            <person name="Doetkott C."/>
            <person name="Skyberg J.A."/>
            <person name="Lynne A.M."/>
            <person name="Johnson J.R."/>
            <person name="Nolan L.K."/>
        </authorList>
    </citation>
    <scope>NUCLEOTIDE SEQUENCE [LARGE SCALE GENOMIC DNA]</scope>
</reference>
<accession>A1AD13</accession>
<feature type="chain" id="PRO_1000043689" description="GTP cyclohydrolase 1">
    <location>
        <begin position="1"/>
        <end position="222"/>
    </location>
</feature>
<feature type="binding site" evidence="2">
    <location>
        <position position="111"/>
    </location>
    <ligand>
        <name>Zn(2+)</name>
        <dbReference type="ChEBI" id="CHEBI:29105"/>
    </ligand>
</feature>
<feature type="binding site" evidence="2">
    <location>
        <position position="114"/>
    </location>
    <ligand>
        <name>Zn(2+)</name>
        <dbReference type="ChEBI" id="CHEBI:29105"/>
    </ligand>
</feature>
<feature type="binding site" evidence="2">
    <location>
        <position position="182"/>
    </location>
    <ligand>
        <name>Zn(2+)</name>
        <dbReference type="ChEBI" id="CHEBI:29105"/>
    </ligand>
</feature>
<name>GCH1_ECOK1</name>
<protein>
    <recommendedName>
        <fullName evidence="2">GTP cyclohydrolase 1</fullName>
        <ecNumber evidence="2">3.5.4.16</ecNumber>
    </recommendedName>
    <alternativeName>
        <fullName evidence="2">GTP cyclohydrolase I</fullName>
        <shortName evidence="2">GTP-CH-I</shortName>
    </alternativeName>
</protein>
<sequence>MPSLSKEAALVHEALVARGLETPLRPPVHEMDNETRKSLIAGHMTEIMQLLNLDLADDSLMETPHRIAKMYVDEIFSGLDYANFPKITLIENKMKVDEMVTVRDITLTSTCEHHFVTIDGKATVAYIPKDSVIGLSKINRIVQFFAQRPQVQERLTQQILIALQTLLGTNNVAVSIDAVHYCVKARGIRDATSATTTTSLGGLFKSSQNTRHEFLRAVRHHN</sequence>
<gene>
    <name evidence="2" type="primary">folE</name>
    <name type="ordered locus">Ecok1_20590</name>
    <name type="ORF">APECO1_4398</name>
</gene>